<reference key="1">
    <citation type="journal article" date="1999" name="Nat. Genet.">
        <title>Comparative genomes of Chlamydia pneumoniae and C. trachomatis.</title>
        <authorList>
            <person name="Kalman S."/>
            <person name="Mitchell W.P."/>
            <person name="Marathe R."/>
            <person name="Lammel C.J."/>
            <person name="Fan J."/>
            <person name="Hyman R.W."/>
            <person name="Olinger L."/>
            <person name="Grimwood J."/>
            <person name="Davis R.W."/>
            <person name="Stephens R.S."/>
        </authorList>
    </citation>
    <scope>NUCLEOTIDE SEQUENCE [LARGE SCALE GENOMIC DNA]</scope>
    <source>
        <strain>CWL029</strain>
    </source>
</reference>
<reference key="2">
    <citation type="journal article" date="2000" name="Nucleic Acids Res.">
        <title>Genome sequences of Chlamydia trachomatis MoPn and Chlamydia pneumoniae AR39.</title>
        <authorList>
            <person name="Read T.D."/>
            <person name="Brunham R.C."/>
            <person name="Shen C."/>
            <person name="Gill S.R."/>
            <person name="Heidelberg J.F."/>
            <person name="White O."/>
            <person name="Hickey E.K."/>
            <person name="Peterson J.D."/>
            <person name="Utterback T.R."/>
            <person name="Berry K.J."/>
            <person name="Bass S."/>
            <person name="Linher K.D."/>
            <person name="Weidman J.F."/>
            <person name="Khouri H.M."/>
            <person name="Craven B."/>
            <person name="Bowman C."/>
            <person name="Dodson R.J."/>
            <person name="Gwinn M.L."/>
            <person name="Nelson W.C."/>
            <person name="DeBoy R.T."/>
            <person name="Kolonay J.F."/>
            <person name="McClarty G."/>
            <person name="Salzberg S.L."/>
            <person name="Eisen J.A."/>
            <person name="Fraser C.M."/>
        </authorList>
    </citation>
    <scope>NUCLEOTIDE SEQUENCE [LARGE SCALE GENOMIC DNA]</scope>
    <source>
        <strain>AR39</strain>
    </source>
</reference>
<reference key="3">
    <citation type="journal article" date="2000" name="Nucleic Acids Res.">
        <title>Comparison of whole genome sequences of Chlamydia pneumoniae J138 from Japan and CWL029 from USA.</title>
        <authorList>
            <person name="Shirai M."/>
            <person name="Hirakawa H."/>
            <person name="Kimoto M."/>
            <person name="Tabuchi M."/>
            <person name="Kishi F."/>
            <person name="Ouchi K."/>
            <person name="Shiba T."/>
            <person name="Ishii K."/>
            <person name="Hattori M."/>
            <person name="Kuhara S."/>
            <person name="Nakazawa T."/>
        </authorList>
    </citation>
    <scope>NUCLEOTIDE SEQUENCE [LARGE SCALE GENOMIC DNA]</scope>
    <source>
        <strain>J138</strain>
    </source>
</reference>
<reference key="4">
    <citation type="submission" date="2002-05" db="EMBL/GenBank/DDBJ databases">
        <title>The genome sequence of Chlamydia pneumoniae TW183 and comparison with other Chlamydia strains based on whole genome sequence analysis.</title>
        <authorList>
            <person name="Geng M.M."/>
            <person name="Schuhmacher A."/>
            <person name="Muehldorfer I."/>
            <person name="Bensch K.W."/>
            <person name="Schaefer K.P."/>
            <person name="Schneider S."/>
            <person name="Pohl T."/>
            <person name="Essig A."/>
            <person name="Marre R."/>
            <person name="Melchers K."/>
        </authorList>
    </citation>
    <scope>NUCLEOTIDE SEQUENCE [LARGE SCALE GENOMIC DNA]</scope>
    <source>
        <strain>TW-183</strain>
    </source>
</reference>
<proteinExistence type="inferred from homology"/>
<dbReference type="EC" id="2.1.1.228"/>
<dbReference type="EMBL" id="AE001363">
    <property type="protein sequence ID" value="AAD18270.1"/>
    <property type="molecule type" value="Genomic_DNA"/>
</dbReference>
<dbReference type="EMBL" id="AE002161">
    <property type="protein sequence ID" value="AAF38470.1"/>
    <property type="molecule type" value="Genomic_DNA"/>
</dbReference>
<dbReference type="EMBL" id="BA000008">
    <property type="protein sequence ID" value="BAA98328.1"/>
    <property type="molecule type" value="Genomic_DNA"/>
</dbReference>
<dbReference type="EMBL" id="AE009440">
    <property type="protein sequence ID" value="AAP98051.1"/>
    <property type="molecule type" value="Genomic_DNA"/>
</dbReference>
<dbReference type="PIR" id="C72117">
    <property type="entry name" value="C72117"/>
</dbReference>
<dbReference type="PIR" id="F86505">
    <property type="entry name" value="F86505"/>
</dbReference>
<dbReference type="RefSeq" id="NP_224325.1">
    <property type="nucleotide sequence ID" value="NC_000922.1"/>
</dbReference>
<dbReference type="RefSeq" id="WP_010882767.1">
    <property type="nucleotide sequence ID" value="NZ_LN847257.1"/>
</dbReference>
<dbReference type="SMR" id="Q9Z964"/>
<dbReference type="STRING" id="406984.CPK_ORF00629"/>
<dbReference type="GeneID" id="45050162"/>
<dbReference type="KEGG" id="cpa:CP_0656"/>
<dbReference type="KEGG" id="cpj:trmD"/>
<dbReference type="KEGG" id="cpn:CPn_0117"/>
<dbReference type="KEGG" id="cpt:CpB0118"/>
<dbReference type="PATRIC" id="fig|115713.3.peg.132"/>
<dbReference type="eggNOG" id="COG0336">
    <property type="taxonomic scope" value="Bacteria"/>
</dbReference>
<dbReference type="eggNOG" id="COG0346">
    <property type="taxonomic scope" value="Bacteria"/>
</dbReference>
<dbReference type="HOGENOM" id="CLU_047363_0_2_0"/>
<dbReference type="OrthoDB" id="9807416at2"/>
<dbReference type="Proteomes" id="UP000000583">
    <property type="component" value="Chromosome"/>
</dbReference>
<dbReference type="Proteomes" id="UP000000801">
    <property type="component" value="Chromosome"/>
</dbReference>
<dbReference type="GO" id="GO:0005829">
    <property type="term" value="C:cytosol"/>
    <property type="evidence" value="ECO:0007669"/>
    <property type="project" value="TreeGrafter"/>
</dbReference>
<dbReference type="GO" id="GO:0052906">
    <property type="term" value="F:tRNA (guanine(37)-N1)-methyltransferase activity"/>
    <property type="evidence" value="ECO:0007669"/>
    <property type="project" value="UniProtKB-UniRule"/>
</dbReference>
<dbReference type="GO" id="GO:0002939">
    <property type="term" value="P:tRNA N1-guanine methylation"/>
    <property type="evidence" value="ECO:0007669"/>
    <property type="project" value="TreeGrafter"/>
</dbReference>
<dbReference type="CDD" id="cd18080">
    <property type="entry name" value="TrmD-like"/>
    <property type="match status" value="1"/>
</dbReference>
<dbReference type="FunFam" id="3.40.1280.10:FF:000001">
    <property type="entry name" value="tRNA (guanine-N(1)-)-methyltransferase"/>
    <property type="match status" value="1"/>
</dbReference>
<dbReference type="Gene3D" id="3.40.1280.10">
    <property type="match status" value="1"/>
</dbReference>
<dbReference type="Gene3D" id="3.10.180.10">
    <property type="entry name" value="2,3-Dihydroxybiphenyl 1,2-Dioxygenase, domain 1"/>
    <property type="match status" value="1"/>
</dbReference>
<dbReference type="Gene3D" id="1.10.1270.20">
    <property type="entry name" value="tRNA(m1g37)methyltransferase, domain 2"/>
    <property type="match status" value="1"/>
</dbReference>
<dbReference type="HAMAP" id="MF_00605">
    <property type="entry name" value="TrmD"/>
    <property type="match status" value="1"/>
</dbReference>
<dbReference type="InterPro" id="IPR029028">
    <property type="entry name" value="Alpha/beta_knot_MTases"/>
</dbReference>
<dbReference type="InterPro" id="IPR029068">
    <property type="entry name" value="Glyas_Bleomycin-R_OHBP_Dase"/>
</dbReference>
<dbReference type="InterPro" id="IPR023148">
    <property type="entry name" value="tRNA_m1G_MeTrfase_C_sf"/>
</dbReference>
<dbReference type="InterPro" id="IPR002649">
    <property type="entry name" value="tRNA_m1G_MeTrfase_TrmD"/>
</dbReference>
<dbReference type="InterPro" id="IPR029026">
    <property type="entry name" value="tRNA_m1G_MTases_N"/>
</dbReference>
<dbReference type="InterPro" id="IPR016009">
    <property type="entry name" value="tRNA_MeTrfase_TRMD/TRM10"/>
</dbReference>
<dbReference type="NCBIfam" id="NF000648">
    <property type="entry name" value="PRK00026.1"/>
    <property type="match status" value="1"/>
</dbReference>
<dbReference type="NCBIfam" id="TIGR00088">
    <property type="entry name" value="trmD"/>
    <property type="match status" value="1"/>
</dbReference>
<dbReference type="PANTHER" id="PTHR46417">
    <property type="entry name" value="TRNA (GUANINE-N(1)-)-METHYLTRANSFERASE"/>
    <property type="match status" value="1"/>
</dbReference>
<dbReference type="PANTHER" id="PTHR46417:SF1">
    <property type="entry name" value="TRNA (GUANINE-N(1)-)-METHYLTRANSFERASE"/>
    <property type="match status" value="1"/>
</dbReference>
<dbReference type="Pfam" id="PF01746">
    <property type="entry name" value="tRNA_m1G_MT"/>
    <property type="match status" value="1"/>
</dbReference>
<dbReference type="SUPFAM" id="SSF75217">
    <property type="entry name" value="alpha/beta knot"/>
    <property type="match status" value="1"/>
</dbReference>
<dbReference type="SUPFAM" id="SSF54593">
    <property type="entry name" value="Glyoxalase/Bleomycin resistance protein/Dihydroxybiphenyl dioxygenase"/>
    <property type="match status" value="1"/>
</dbReference>
<organism>
    <name type="scientific">Chlamydia pneumoniae</name>
    <name type="common">Chlamydophila pneumoniae</name>
    <dbReference type="NCBI Taxonomy" id="83558"/>
    <lineage>
        <taxon>Bacteria</taxon>
        <taxon>Pseudomonadati</taxon>
        <taxon>Chlamydiota</taxon>
        <taxon>Chlamydiia</taxon>
        <taxon>Chlamydiales</taxon>
        <taxon>Chlamydiaceae</taxon>
        <taxon>Chlamydia/Chlamydophila group</taxon>
        <taxon>Chlamydia</taxon>
    </lineage>
</organism>
<keyword id="KW-0963">Cytoplasm</keyword>
<keyword id="KW-0489">Methyltransferase</keyword>
<keyword id="KW-0949">S-adenosyl-L-methionine</keyword>
<keyword id="KW-0808">Transferase</keyword>
<keyword id="KW-0819">tRNA processing</keyword>
<evidence type="ECO:0000250" key="1"/>
<evidence type="ECO:0000305" key="2"/>
<protein>
    <recommendedName>
        <fullName>tRNA (guanine-N(1)-)-methyltransferase</fullName>
        <ecNumber>2.1.1.228</ecNumber>
    </recommendedName>
    <alternativeName>
        <fullName>M1G-methyltransferase</fullName>
    </alternativeName>
    <alternativeName>
        <fullName>tRNA [GM37] methyltransferase</fullName>
    </alternativeName>
</protein>
<accession>Q9Z964</accession>
<sequence length="361" mass="41248">MKIDILSLFPGYFDGPLQTSILGRAIKQRLLDVQLTNLRDFGLGKWKQVDDTPFSGGGMLLMAEPVTSAIRSVRKENSKVIYLSPQGALLTAEKSRELAAASHLILLCGHYEGIDERAIESEVDEEISIGDYVLTNGGIAALVLIDAVSRFIPGVLGNQESAERDSLENGLLEGPQYTRPREFEGKEVPEVLLQGDHKAISQWRLEQSERRTYERRPDLYLNYLYKRSIDHKFDEETTTNRDHFKCDKISVVLEVNKLKRAKNFYCKVFGLDAMSCENKFCLPHEGKTIFWLREVQAEKKNIVTLSLSLDCACEEDFCYLLRRWELFGGKLLEKQADEHAVWALAQDLDGHAWIFSWHRMK</sequence>
<feature type="chain" id="PRO_0000060354" description="tRNA (guanine-N(1)-)-methyltransferase">
    <location>
        <begin position="1"/>
        <end position="361"/>
    </location>
</feature>
<feature type="binding site" evidence="1">
    <location>
        <position position="109"/>
    </location>
    <ligand>
        <name>S-adenosyl-L-methionine</name>
        <dbReference type="ChEBI" id="CHEBI:59789"/>
    </ligand>
</feature>
<feature type="binding site" evidence="1">
    <location>
        <begin position="129"/>
        <end position="134"/>
    </location>
    <ligand>
        <name>S-adenosyl-L-methionine</name>
        <dbReference type="ChEBI" id="CHEBI:59789"/>
    </ligand>
</feature>
<gene>
    <name type="primary">trmD</name>
    <name type="ordered locus">CPn_0117</name>
    <name type="ordered locus">CP_0656</name>
    <name type="ordered locus">CpB0118</name>
</gene>
<name>TRMD_CHLPN</name>
<comment type="function">
    <text evidence="1">Specifically methylates guanosine-37 in various tRNAs.</text>
</comment>
<comment type="catalytic activity">
    <reaction>
        <text>guanosine(37) in tRNA + S-adenosyl-L-methionine = N(1)-methylguanosine(37) in tRNA + S-adenosyl-L-homocysteine + H(+)</text>
        <dbReference type="Rhea" id="RHEA:36899"/>
        <dbReference type="Rhea" id="RHEA-COMP:10145"/>
        <dbReference type="Rhea" id="RHEA-COMP:10147"/>
        <dbReference type="ChEBI" id="CHEBI:15378"/>
        <dbReference type="ChEBI" id="CHEBI:57856"/>
        <dbReference type="ChEBI" id="CHEBI:59789"/>
        <dbReference type="ChEBI" id="CHEBI:73542"/>
        <dbReference type="ChEBI" id="CHEBI:74269"/>
        <dbReference type="EC" id="2.1.1.228"/>
    </reaction>
</comment>
<comment type="subunit">
    <text evidence="1">Homodimer.</text>
</comment>
<comment type="subcellular location">
    <subcellularLocation>
        <location evidence="2">Cytoplasm</location>
    </subcellularLocation>
</comment>
<comment type="similarity">
    <text evidence="2">Belongs to the RNA methyltransferase TrmD family.</text>
</comment>